<proteinExistence type="inferred from homology"/>
<sequence length="95" mass="10320">MTVDAATVRRIAHLARIAVDDAEVPHLQGELNAILAFVEQLQEVNVDGVEPMTSVMPMEMKKRADVVNDGGIADKIVGNAPVTDDHFFLVPKVVE</sequence>
<name>GATC_NITHX</name>
<evidence type="ECO:0000255" key="1">
    <source>
        <dbReference type="HAMAP-Rule" id="MF_00122"/>
    </source>
</evidence>
<reference key="1">
    <citation type="submission" date="2006-03" db="EMBL/GenBank/DDBJ databases">
        <title>Complete sequence of chromosome of Nitrobacter hamburgensis X14.</title>
        <authorList>
            <consortium name="US DOE Joint Genome Institute"/>
            <person name="Copeland A."/>
            <person name="Lucas S."/>
            <person name="Lapidus A."/>
            <person name="Barry K."/>
            <person name="Detter J.C."/>
            <person name="Glavina del Rio T."/>
            <person name="Hammon N."/>
            <person name="Israni S."/>
            <person name="Dalin E."/>
            <person name="Tice H."/>
            <person name="Pitluck S."/>
            <person name="Chain P."/>
            <person name="Malfatti S."/>
            <person name="Shin M."/>
            <person name="Vergez L."/>
            <person name="Schmutz J."/>
            <person name="Larimer F."/>
            <person name="Land M."/>
            <person name="Hauser L."/>
            <person name="Kyrpides N."/>
            <person name="Ivanova N."/>
            <person name="Ward B."/>
            <person name="Arp D."/>
            <person name="Klotz M."/>
            <person name="Stein L."/>
            <person name="O'Mullan G."/>
            <person name="Starkenburg S."/>
            <person name="Sayavedra L."/>
            <person name="Poret-Peterson A.T."/>
            <person name="Gentry M.E."/>
            <person name="Bruce D."/>
            <person name="Richardson P."/>
        </authorList>
    </citation>
    <scope>NUCLEOTIDE SEQUENCE [LARGE SCALE GENOMIC DNA]</scope>
    <source>
        <strain>DSM 10229 / NCIMB 13809 / X14</strain>
    </source>
</reference>
<accession>Q1QL28</accession>
<comment type="function">
    <text evidence="1">Allows the formation of correctly charged Asn-tRNA(Asn) or Gln-tRNA(Gln) through the transamidation of misacylated Asp-tRNA(Asn) or Glu-tRNA(Gln) in organisms which lack either or both of asparaginyl-tRNA or glutaminyl-tRNA synthetases. The reaction takes place in the presence of glutamine and ATP through an activated phospho-Asp-tRNA(Asn) or phospho-Glu-tRNA(Gln).</text>
</comment>
<comment type="catalytic activity">
    <reaction evidence="1">
        <text>L-glutamyl-tRNA(Gln) + L-glutamine + ATP + H2O = L-glutaminyl-tRNA(Gln) + L-glutamate + ADP + phosphate + H(+)</text>
        <dbReference type="Rhea" id="RHEA:17521"/>
        <dbReference type="Rhea" id="RHEA-COMP:9681"/>
        <dbReference type="Rhea" id="RHEA-COMP:9684"/>
        <dbReference type="ChEBI" id="CHEBI:15377"/>
        <dbReference type="ChEBI" id="CHEBI:15378"/>
        <dbReference type="ChEBI" id="CHEBI:29985"/>
        <dbReference type="ChEBI" id="CHEBI:30616"/>
        <dbReference type="ChEBI" id="CHEBI:43474"/>
        <dbReference type="ChEBI" id="CHEBI:58359"/>
        <dbReference type="ChEBI" id="CHEBI:78520"/>
        <dbReference type="ChEBI" id="CHEBI:78521"/>
        <dbReference type="ChEBI" id="CHEBI:456216"/>
    </reaction>
</comment>
<comment type="catalytic activity">
    <reaction evidence="1">
        <text>L-aspartyl-tRNA(Asn) + L-glutamine + ATP + H2O = L-asparaginyl-tRNA(Asn) + L-glutamate + ADP + phosphate + 2 H(+)</text>
        <dbReference type="Rhea" id="RHEA:14513"/>
        <dbReference type="Rhea" id="RHEA-COMP:9674"/>
        <dbReference type="Rhea" id="RHEA-COMP:9677"/>
        <dbReference type="ChEBI" id="CHEBI:15377"/>
        <dbReference type="ChEBI" id="CHEBI:15378"/>
        <dbReference type="ChEBI" id="CHEBI:29985"/>
        <dbReference type="ChEBI" id="CHEBI:30616"/>
        <dbReference type="ChEBI" id="CHEBI:43474"/>
        <dbReference type="ChEBI" id="CHEBI:58359"/>
        <dbReference type="ChEBI" id="CHEBI:78515"/>
        <dbReference type="ChEBI" id="CHEBI:78516"/>
        <dbReference type="ChEBI" id="CHEBI:456216"/>
    </reaction>
</comment>
<comment type="subunit">
    <text evidence="1">Heterotrimer of A, B and C subunits.</text>
</comment>
<comment type="similarity">
    <text evidence="1">Belongs to the GatC family.</text>
</comment>
<protein>
    <recommendedName>
        <fullName evidence="1">Aspartyl/glutamyl-tRNA(Asn/Gln) amidotransferase subunit C</fullName>
        <shortName evidence="1">Asp/Glu-ADT subunit C</shortName>
        <ecNumber evidence="1">6.3.5.-</ecNumber>
    </recommendedName>
</protein>
<dbReference type="EC" id="6.3.5.-" evidence="1"/>
<dbReference type="EMBL" id="CP000319">
    <property type="protein sequence ID" value="ABE63069.1"/>
    <property type="molecule type" value="Genomic_DNA"/>
</dbReference>
<dbReference type="RefSeq" id="WP_011510746.1">
    <property type="nucleotide sequence ID" value="NC_007964.1"/>
</dbReference>
<dbReference type="SMR" id="Q1QL28"/>
<dbReference type="STRING" id="323097.Nham_2277"/>
<dbReference type="KEGG" id="nha:Nham_2277"/>
<dbReference type="eggNOG" id="COG0721">
    <property type="taxonomic scope" value="Bacteria"/>
</dbReference>
<dbReference type="HOGENOM" id="CLU_105899_2_0_5"/>
<dbReference type="OrthoDB" id="9794326at2"/>
<dbReference type="Proteomes" id="UP000001953">
    <property type="component" value="Chromosome"/>
</dbReference>
<dbReference type="GO" id="GO:0050566">
    <property type="term" value="F:asparaginyl-tRNA synthase (glutamine-hydrolyzing) activity"/>
    <property type="evidence" value="ECO:0007669"/>
    <property type="project" value="RHEA"/>
</dbReference>
<dbReference type="GO" id="GO:0005524">
    <property type="term" value="F:ATP binding"/>
    <property type="evidence" value="ECO:0007669"/>
    <property type="project" value="UniProtKB-KW"/>
</dbReference>
<dbReference type="GO" id="GO:0050567">
    <property type="term" value="F:glutaminyl-tRNA synthase (glutamine-hydrolyzing) activity"/>
    <property type="evidence" value="ECO:0007669"/>
    <property type="project" value="UniProtKB-UniRule"/>
</dbReference>
<dbReference type="GO" id="GO:0070681">
    <property type="term" value="P:glutaminyl-tRNAGln biosynthesis via transamidation"/>
    <property type="evidence" value="ECO:0007669"/>
    <property type="project" value="TreeGrafter"/>
</dbReference>
<dbReference type="GO" id="GO:0006450">
    <property type="term" value="P:regulation of translational fidelity"/>
    <property type="evidence" value="ECO:0007669"/>
    <property type="project" value="InterPro"/>
</dbReference>
<dbReference type="GO" id="GO:0006412">
    <property type="term" value="P:translation"/>
    <property type="evidence" value="ECO:0007669"/>
    <property type="project" value="UniProtKB-UniRule"/>
</dbReference>
<dbReference type="Gene3D" id="1.10.20.60">
    <property type="entry name" value="Glu-tRNAGln amidotransferase C subunit, N-terminal domain"/>
    <property type="match status" value="1"/>
</dbReference>
<dbReference type="HAMAP" id="MF_00122">
    <property type="entry name" value="GatC"/>
    <property type="match status" value="1"/>
</dbReference>
<dbReference type="InterPro" id="IPR036113">
    <property type="entry name" value="Asp/Glu-ADT_sf_sub_c"/>
</dbReference>
<dbReference type="InterPro" id="IPR003837">
    <property type="entry name" value="GatC"/>
</dbReference>
<dbReference type="NCBIfam" id="TIGR00135">
    <property type="entry name" value="gatC"/>
    <property type="match status" value="1"/>
</dbReference>
<dbReference type="PANTHER" id="PTHR15004">
    <property type="entry name" value="GLUTAMYL-TRNA(GLN) AMIDOTRANSFERASE SUBUNIT C, MITOCHONDRIAL"/>
    <property type="match status" value="1"/>
</dbReference>
<dbReference type="PANTHER" id="PTHR15004:SF0">
    <property type="entry name" value="GLUTAMYL-TRNA(GLN) AMIDOTRANSFERASE SUBUNIT C, MITOCHONDRIAL"/>
    <property type="match status" value="1"/>
</dbReference>
<dbReference type="Pfam" id="PF02686">
    <property type="entry name" value="GatC"/>
    <property type="match status" value="1"/>
</dbReference>
<dbReference type="SUPFAM" id="SSF141000">
    <property type="entry name" value="Glu-tRNAGln amidotransferase C subunit"/>
    <property type="match status" value="1"/>
</dbReference>
<gene>
    <name evidence="1" type="primary">gatC</name>
    <name type="ordered locus">Nham_2277</name>
</gene>
<organism>
    <name type="scientific">Nitrobacter hamburgensis (strain DSM 10229 / NCIMB 13809 / X14)</name>
    <dbReference type="NCBI Taxonomy" id="323097"/>
    <lineage>
        <taxon>Bacteria</taxon>
        <taxon>Pseudomonadati</taxon>
        <taxon>Pseudomonadota</taxon>
        <taxon>Alphaproteobacteria</taxon>
        <taxon>Hyphomicrobiales</taxon>
        <taxon>Nitrobacteraceae</taxon>
        <taxon>Nitrobacter</taxon>
    </lineage>
</organism>
<keyword id="KW-0067">ATP-binding</keyword>
<keyword id="KW-0436">Ligase</keyword>
<keyword id="KW-0547">Nucleotide-binding</keyword>
<keyword id="KW-0648">Protein biosynthesis</keyword>
<keyword id="KW-1185">Reference proteome</keyword>
<feature type="chain" id="PRO_1000016157" description="Aspartyl/glutamyl-tRNA(Asn/Gln) amidotransferase subunit C">
    <location>
        <begin position="1"/>
        <end position="95"/>
    </location>
</feature>